<comment type="function">
    <text evidence="1">Binds to the 23S rRNA.</text>
</comment>
<comment type="similarity">
    <text evidence="1">Belongs to the bacterial ribosomal protein bL9 family.</text>
</comment>
<feature type="chain" id="PRO_0000258464" description="Large ribosomal subunit protein bL9">
    <location>
        <begin position="1"/>
        <end position="173"/>
    </location>
</feature>
<feature type="region of interest" description="Disordered" evidence="2">
    <location>
        <begin position="151"/>
        <end position="173"/>
    </location>
</feature>
<keyword id="KW-1185">Reference proteome</keyword>
<keyword id="KW-0687">Ribonucleoprotein</keyword>
<keyword id="KW-0689">Ribosomal protein</keyword>
<keyword id="KW-0694">RNA-binding</keyword>
<keyword id="KW-0699">rRNA-binding</keyword>
<name>RL9_LAWIP</name>
<gene>
    <name evidence="1" type="primary">rplI</name>
    <name type="ordered locus">LI0353</name>
</gene>
<evidence type="ECO:0000255" key="1">
    <source>
        <dbReference type="HAMAP-Rule" id="MF_00503"/>
    </source>
</evidence>
<evidence type="ECO:0000256" key="2">
    <source>
        <dbReference type="SAM" id="MobiDB-lite"/>
    </source>
</evidence>
<evidence type="ECO:0000305" key="3"/>
<organism>
    <name type="scientific">Lawsonia intracellularis (strain PHE/MN1-00)</name>
    <dbReference type="NCBI Taxonomy" id="363253"/>
    <lineage>
        <taxon>Bacteria</taxon>
        <taxon>Pseudomonadati</taxon>
        <taxon>Thermodesulfobacteriota</taxon>
        <taxon>Desulfovibrionia</taxon>
        <taxon>Desulfovibrionales</taxon>
        <taxon>Desulfovibrionaceae</taxon>
        <taxon>Lawsonia</taxon>
    </lineage>
</organism>
<proteinExistence type="inferred from homology"/>
<accession>Q1MRG7</accession>
<sequence length="173" mass="19458">MKVILRSDVENLGRLGDIVTVKSGYGRNYLLPQGLAMLVTPGNMKVFELEFKKLQERMNDIRSKADELAKRISGLIVTVLMRAGDNDKLYGSVTTSIIGHALAEQGIDIDRRRILLDAPIRTLGQHTVRVRLHADVIAEFIVNVASEEKLYDDTPDRTETEESTKELQEEHAE</sequence>
<protein>
    <recommendedName>
        <fullName evidence="1">Large ribosomal subunit protein bL9</fullName>
    </recommendedName>
    <alternativeName>
        <fullName evidence="3">50S ribosomal protein L9</fullName>
    </alternativeName>
</protein>
<reference key="1">
    <citation type="submission" date="2005-11" db="EMBL/GenBank/DDBJ databases">
        <title>The complete genome sequence of Lawsonia intracellularis: the causative agent of proliferative enteropathy.</title>
        <authorList>
            <person name="Kaur K."/>
            <person name="Zhang Q."/>
            <person name="Beckler D."/>
            <person name="Munir S."/>
            <person name="Li L."/>
            <person name="Kinsley K."/>
            <person name="Herron L."/>
            <person name="Peterson A."/>
            <person name="May B."/>
            <person name="Singh S."/>
            <person name="Gebhart C."/>
            <person name="Kapur V."/>
        </authorList>
    </citation>
    <scope>NUCLEOTIDE SEQUENCE [LARGE SCALE GENOMIC DNA]</scope>
    <source>
        <strain>PHE/MN1-00</strain>
    </source>
</reference>
<dbReference type="EMBL" id="AM180252">
    <property type="protein sequence ID" value="CAJ54409.1"/>
    <property type="molecule type" value="Genomic_DNA"/>
</dbReference>
<dbReference type="RefSeq" id="WP_011526438.1">
    <property type="nucleotide sequence ID" value="NC_008011.1"/>
</dbReference>
<dbReference type="SMR" id="Q1MRG7"/>
<dbReference type="STRING" id="363253.LI0353"/>
<dbReference type="KEGG" id="lip:LI0353"/>
<dbReference type="eggNOG" id="COG0359">
    <property type="taxonomic scope" value="Bacteria"/>
</dbReference>
<dbReference type="HOGENOM" id="CLU_078938_3_0_7"/>
<dbReference type="OrthoDB" id="9788336at2"/>
<dbReference type="Proteomes" id="UP000002430">
    <property type="component" value="Chromosome"/>
</dbReference>
<dbReference type="GO" id="GO:1990904">
    <property type="term" value="C:ribonucleoprotein complex"/>
    <property type="evidence" value="ECO:0007669"/>
    <property type="project" value="UniProtKB-KW"/>
</dbReference>
<dbReference type="GO" id="GO:0005840">
    <property type="term" value="C:ribosome"/>
    <property type="evidence" value="ECO:0007669"/>
    <property type="project" value="UniProtKB-KW"/>
</dbReference>
<dbReference type="GO" id="GO:0019843">
    <property type="term" value="F:rRNA binding"/>
    <property type="evidence" value="ECO:0007669"/>
    <property type="project" value="UniProtKB-UniRule"/>
</dbReference>
<dbReference type="GO" id="GO:0003735">
    <property type="term" value="F:structural constituent of ribosome"/>
    <property type="evidence" value="ECO:0007669"/>
    <property type="project" value="InterPro"/>
</dbReference>
<dbReference type="GO" id="GO:0006412">
    <property type="term" value="P:translation"/>
    <property type="evidence" value="ECO:0007669"/>
    <property type="project" value="UniProtKB-UniRule"/>
</dbReference>
<dbReference type="Gene3D" id="3.10.430.100">
    <property type="entry name" value="Ribosomal protein L9, C-terminal domain"/>
    <property type="match status" value="1"/>
</dbReference>
<dbReference type="Gene3D" id="3.40.5.10">
    <property type="entry name" value="Ribosomal protein L9, N-terminal domain"/>
    <property type="match status" value="1"/>
</dbReference>
<dbReference type="HAMAP" id="MF_00503">
    <property type="entry name" value="Ribosomal_bL9"/>
    <property type="match status" value="1"/>
</dbReference>
<dbReference type="InterPro" id="IPR000244">
    <property type="entry name" value="Ribosomal_bL9"/>
</dbReference>
<dbReference type="InterPro" id="IPR009027">
    <property type="entry name" value="Ribosomal_bL9/RNase_H1_N"/>
</dbReference>
<dbReference type="InterPro" id="IPR020594">
    <property type="entry name" value="Ribosomal_bL9_bac/chp"/>
</dbReference>
<dbReference type="InterPro" id="IPR020069">
    <property type="entry name" value="Ribosomal_bL9_C"/>
</dbReference>
<dbReference type="InterPro" id="IPR036791">
    <property type="entry name" value="Ribosomal_bL9_C_sf"/>
</dbReference>
<dbReference type="InterPro" id="IPR020070">
    <property type="entry name" value="Ribosomal_bL9_N"/>
</dbReference>
<dbReference type="InterPro" id="IPR036935">
    <property type="entry name" value="Ribosomal_bL9_N_sf"/>
</dbReference>
<dbReference type="NCBIfam" id="TIGR00158">
    <property type="entry name" value="L9"/>
    <property type="match status" value="1"/>
</dbReference>
<dbReference type="PANTHER" id="PTHR21368">
    <property type="entry name" value="50S RIBOSOMAL PROTEIN L9"/>
    <property type="match status" value="1"/>
</dbReference>
<dbReference type="Pfam" id="PF03948">
    <property type="entry name" value="Ribosomal_L9_C"/>
    <property type="match status" value="1"/>
</dbReference>
<dbReference type="Pfam" id="PF01281">
    <property type="entry name" value="Ribosomal_L9_N"/>
    <property type="match status" value="1"/>
</dbReference>
<dbReference type="SUPFAM" id="SSF55658">
    <property type="entry name" value="L9 N-domain-like"/>
    <property type="match status" value="1"/>
</dbReference>
<dbReference type="SUPFAM" id="SSF55653">
    <property type="entry name" value="Ribosomal protein L9 C-domain"/>
    <property type="match status" value="1"/>
</dbReference>
<dbReference type="PROSITE" id="PS00651">
    <property type="entry name" value="RIBOSOMAL_L9"/>
    <property type="match status" value="1"/>
</dbReference>